<name>TRPA_STAA8</name>
<gene>
    <name evidence="1" type="primary">trpA</name>
    <name type="ordered locus">SAOUHSC_01372</name>
</gene>
<comment type="function">
    <text evidence="1">The alpha subunit is responsible for the aldol cleavage of indoleglycerol phosphate to indole and glyceraldehyde 3-phosphate.</text>
</comment>
<comment type="catalytic activity">
    <reaction evidence="1">
        <text>(1S,2R)-1-C-(indol-3-yl)glycerol 3-phosphate + L-serine = D-glyceraldehyde 3-phosphate + L-tryptophan + H2O</text>
        <dbReference type="Rhea" id="RHEA:10532"/>
        <dbReference type="ChEBI" id="CHEBI:15377"/>
        <dbReference type="ChEBI" id="CHEBI:33384"/>
        <dbReference type="ChEBI" id="CHEBI:57912"/>
        <dbReference type="ChEBI" id="CHEBI:58866"/>
        <dbReference type="ChEBI" id="CHEBI:59776"/>
        <dbReference type="EC" id="4.2.1.20"/>
    </reaction>
</comment>
<comment type="pathway">
    <text evidence="1">Amino-acid biosynthesis; L-tryptophan biosynthesis; L-tryptophan from chorismate: step 5/5.</text>
</comment>
<comment type="subunit">
    <text evidence="1">Tetramer of two alpha and two beta chains.</text>
</comment>
<comment type="similarity">
    <text evidence="1">Belongs to the TrpA family.</text>
</comment>
<proteinExistence type="inferred from homology"/>
<dbReference type="EC" id="4.2.1.20" evidence="1"/>
<dbReference type="EMBL" id="CP000253">
    <property type="protein sequence ID" value="ABD30467.1"/>
    <property type="molecule type" value="Genomic_DNA"/>
</dbReference>
<dbReference type="RefSeq" id="WP_000163627.1">
    <property type="nucleotide sequence ID" value="NZ_LS483365.1"/>
</dbReference>
<dbReference type="RefSeq" id="YP_499899.1">
    <property type="nucleotide sequence ID" value="NC_007795.1"/>
</dbReference>
<dbReference type="SMR" id="Q2FYR3"/>
<dbReference type="STRING" id="93061.SAOUHSC_01372"/>
<dbReference type="PaxDb" id="1280-SAXN108_1389"/>
<dbReference type="GeneID" id="3920781"/>
<dbReference type="KEGG" id="sao:SAOUHSC_01372"/>
<dbReference type="PATRIC" id="fig|93061.5.peg.1256"/>
<dbReference type="eggNOG" id="COG0159">
    <property type="taxonomic scope" value="Bacteria"/>
</dbReference>
<dbReference type="HOGENOM" id="CLU_016734_0_0_9"/>
<dbReference type="OrthoDB" id="9804578at2"/>
<dbReference type="UniPathway" id="UPA00035">
    <property type="reaction ID" value="UER00044"/>
</dbReference>
<dbReference type="PRO" id="PR:Q2FYR3"/>
<dbReference type="Proteomes" id="UP000008816">
    <property type="component" value="Chromosome"/>
</dbReference>
<dbReference type="GO" id="GO:0005829">
    <property type="term" value="C:cytosol"/>
    <property type="evidence" value="ECO:0000318"/>
    <property type="project" value="GO_Central"/>
</dbReference>
<dbReference type="GO" id="GO:0004834">
    <property type="term" value="F:tryptophan synthase activity"/>
    <property type="evidence" value="ECO:0000318"/>
    <property type="project" value="GO_Central"/>
</dbReference>
<dbReference type="GO" id="GO:0000162">
    <property type="term" value="P:L-tryptophan biosynthetic process"/>
    <property type="evidence" value="ECO:0000318"/>
    <property type="project" value="GO_Central"/>
</dbReference>
<dbReference type="CDD" id="cd04724">
    <property type="entry name" value="Tryptophan_synthase_alpha"/>
    <property type="match status" value="1"/>
</dbReference>
<dbReference type="Gene3D" id="3.20.20.70">
    <property type="entry name" value="Aldolase class I"/>
    <property type="match status" value="1"/>
</dbReference>
<dbReference type="HAMAP" id="MF_00131">
    <property type="entry name" value="Trp_synth_alpha"/>
    <property type="match status" value="1"/>
</dbReference>
<dbReference type="InterPro" id="IPR013785">
    <property type="entry name" value="Aldolase_TIM"/>
</dbReference>
<dbReference type="InterPro" id="IPR011060">
    <property type="entry name" value="RibuloseP-bd_barrel"/>
</dbReference>
<dbReference type="InterPro" id="IPR018204">
    <property type="entry name" value="Trp_synthase_alpha_AS"/>
</dbReference>
<dbReference type="InterPro" id="IPR002028">
    <property type="entry name" value="Trp_synthase_suA"/>
</dbReference>
<dbReference type="NCBIfam" id="TIGR00262">
    <property type="entry name" value="trpA"/>
    <property type="match status" value="1"/>
</dbReference>
<dbReference type="PANTHER" id="PTHR43406:SF1">
    <property type="entry name" value="TRYPTOPHAN SYNTHASE ALPHA CHAIN, CHLOROPLASTIC"/>
    <property type="match status" value="1"/>
</dbReference>
<dbReference type="PANTHER" id="PTHR43406">
    <property type="entry name" value="TRYPTOPHAN SYNTHASE, ALPHA CHAIN"/>
    <property type="match status" value="1"/>
</dbReference>
<dbReference type="Pfam" id="PF00290">
    <property type="entry name" value="Trp_syntA"/>
    <property type="match status" value="1"/>
</dbReference>
<dbReference type="SUPFAM" id="SSF51366">
    <property type="entry name" value="Ribulose-phoshate binding barrel"/>
    <property type="match status" value="1"/>
</dbReference>
<dbReference type="PROSITE" id="PS00167">
    <property type="entry name" value="TRP_SYNTHASE_ALPHA"/>
    <property type="match status" value="1"/>
</dbReference>
<keyword id="KW-0028">Amino-acid biosynthesis</keyword>
<keyword id="KW-0057">Aromatic amino acid biosynthesis</keyword>
<keyword id="KW-0456">Lyase</keyword>
<keyword id="KW-1185">Reference proteome</keyword>
<keyword id="KW-0822">Tryptophan biosynthesis</keyword>
<protein>
    <recommendedName>
        <fullName evidence="1">Tryptophan synthase alpha chain</fullName>
        <ecNumber evidence="1">4.2.1.20</ecNumber>
    </recommendedName>
</protein>
<feature type="chain" id="PRO_1000018290" description="Tryptophan synthase alpha chain">
    <location>
        <begin position="1"/>
        <end position="242"/>
    </location>
</feature>
<feature type="active site" description="Proton acceptor" evidence="1">
    <location>
        <position position="31"/>
    </location>
</feature>
<feature type="active site" description="Proton acceptor" evidence="1">
    <location>
        <position position="42"/>
    </location>
</feature>
<sequence>MTKLFIPYIMGNKDLIENATLLSENGADIIEIGVPFSDPVADGPVIMEAGQQAIKQGITIDYIFNQLEKHGDQIKCNYVLMTYYNIICHYGEQAFFEKCRDTGVYGLIIPDLPYELSQRLKQQFSHYGVKIISLVAMTTDDKRIKDIVSHAEGFIYTVTMNATTGQNGAFHPELKRKIESIKAIANVPVVAGFGIRTPQHVADIKEVADGIVIGSEIVKRFKSNTREEIIKYLQSIQQTLNN</sequence>
<accession>Q2FYR3</accession>
<organism>
    <name type="scientific">Staphylococcus aureus (strain NCTC 8325 / PS 47)</name>
    <dbReference type="NCBI Taxonomy" id="93061"/>
    <lineage>
        <taxon>Bacteria</taxon>
        <taxon>Bacillati</taxon>
        <taxon>Bacillota</taxon>
        <taxon>Bacilli</taxon>
        <taxon>Bacillales</taxon>
        <taxon>Staphylococcaceae</taxon>
        <taxon>Staphylococcus</taxon>
    </lineage>
</organism>
<reference key="1">
    <citation type="book" date="2006" name="Gram positive pathogens, 2nd edition">
        <title>The Staphylococcus aureus NCTC 8325 genome.</title>
        <editorList>
            <person name="Fischetti V."/>
            <person name="Novick R."/>
            <person name="Ferretti J."/>
            <person name="Portnoy D."/>
            <person name="Rood J."/>
        </editorList>
        <authorList>
            <person name="Gillaspy A.F."/>
            <person name="Worrell V."/>
            <person name="Orvis J."/>
            <person name="Roe B.A."/>
            <person name="Dyer D.W."/>
            <person name="Iandolo J.J."/>
        </authorList>
    </citation>
    <scope>NUCLEOTIDE SEQUENCE [LARGE SCALE GENOMIC DNA]</scope>
    <source>
        <strain>NCTC 8325 / PS 47</strain>
    </source>
</reference>
<evidence type="ECO:0000255" key="1">
    <source>
        <dbReference type="HAMAP-Rule" id="MF_00131"/>
    </source>
</evidence>